<protein>
    <recommendedName>
        <fullName evidence="1">Large ribosomal subunit protein uL2</fullName>
    </recommendedName>
    <alternativeName>
        <fullName evidence="3">50S ribosomal protein L2</fullName>
    </alternativeName>
</protein>
<keyword id="KW-1185">Reference proteome</keyword>
<keyword id="KW-0687">Ribonucleoprotein</keyword>
<keyword id="KW-0689">Ribosomal protein</keyword>
<keyword id="KW-0694">RNA-binding</keyword>
<keyword id="KW-0699">rRNA-binding</keyword>
<dbReference type="EMBL" id="AE000782">
    <property type="protein sequence ID" value="AAB89334.1"/>
    <property type="molecule type" value="Genomic_DNA"/>
</dbReference>
<dbReference type="PIR" id="A69490">
    <property type="entry name" value="A69490"/>
</dbReference>
<dbReference type="RefSeq" id="WP_010879415.1">
    <property type="nucleotide sequence ID" value="NC_000917.1"/>
</dbReference>
<dbReference type="SMR" id="O28357"/>
<dbReference type="STRING" id="224325.AF_1922"/>
<dbReference type="PaxDb" id="224325-AF_1922"/>
<dbReference type="EnsemblBacteria" id="AAB89334">
    <property type="protein sequence ID" value="AAB89334"/>
    <property type="gene ID" value="AF_1922"/>
</dbReference>
<dbReference type="KEGG" id="afu:AF_1922"/>
<dbReference type="eggNOG" id="arCOG04067">
    <property type="taxonomic scope" value="Archaea"/>
</dbReference>
<dbReference type="HOGENOM" id="CLU_036235_0_3_2"/>
<dbReference type="OrthoDB" id="5987at2157"/>
<dbReference type="PhylomeDB" id="O28357"/>
<dbReference type="Proteomes" id="UP000002199">
    <property type="component" value="Chromosome"/>
</dbReference>
<dbReference type="GO" id="GO:0022625">
    <property type="term" value="C:cytosolic large ribosomal subunit"/>
    <property type="evidence" value="ECO:0007669"/>
    <property type="project" value="TreeGrafter"/>
</dbReference>
<dbReference type="GO" id="GO:0019843">
    <property type="term" value="F:rRNA binding"/>
    <property type="evidence" value="ECO:0007669"/>
    <property type="project" value="UniProtKB-UniRule"/>
</dbReference>
<dbReference type="GO" id="GO:0003735">
    <property type="term" value="F:structural constituent of ribosome"/>
    <property type="evidence" value="ECO:0007669"/>
    <property type="project" value="InterPro"/>
</dbReference>
<dbReference type="GO" id="GO:0002181">
    <property type="term" value="P:cytoplasmic translation"/>
    <property type="evidence" value="ECO:0007669"/>
    <property type="project" value="TreeGrafter"/>
</dbReference>
<dbReference type="FunFam" id="4.10.950.10:FF:000002">
    <property type="entry name" value="60S ribosomal protein L2"/>
    <property type="match status" value="1"/>
</dbReference>
<dbReference type="Gene3D" id="2.30.30.30">
    <property type="match status" value="1"/>
</dbReference>
<dbReference type="Gene3D" id="2.40.50.140">
    <property type="entry name" value="Nucleic acid-binding proteins"/>
    <property type="match status" value="1"/>
</dbReference>
<dbReference type="Gene3D" id="4.10.950.10">
    <property type="entry name" value="Ribosomal protein L2, domain 3"/>
    <property type="match status" value="1"/>
</dbReference>
<dbReference type="HAMAP" id="MF_01320_A">
    <property type="entry name" value="Ribosomal_uL2_A"/>
    <property type="match status" value="1"/>
</dbReference>
<dbReference type="InterPro" id="IPR012340">
    <property type="entry name" value="NA-bd_OB-fold"/>
</dbReference>
<dbReference type="InterPro" id="IPR014722">
    <property type="entry name" value="Rib_uL2_dom2"/>
</dbReference>
<dbReference type="InterPro" id="IPR002171">
    <property type="entry name" value="Ribosomal_uL2"/>
</dbReference>
<dbReference type="InterPro" id="IPR023672">
    <property type="entry name" value="Ribosomal_uL2_arc_euk"/>
</dbReference>
<dbReference type="InterPro" id="IPR022669">
    <property type="entry name" value="Ribosomal_uL2_C"/>
</dbReference>
<dbReference type="InterPro" id="IPR022671">
    <property type="entry name" value="Ribosomal_uL2_CS"/>
</dbReference>
<dbReference type="InterPro" id="IPR014726">
    <property type="entry name" value="Ribosomal_uL2_dom3"/>
</dbReference>
<dbReference type="InterPro" id="IPR022666">
    <property type="entry name" value="Ribosomal_uL2_RNA-bd_dom"/>
</dbReference>
<dbReference type="InterPro" id="IPR008991">
    <property type="entry name" value="Translation_prot_SH3-like_sf"/>
</dbReference>
<dbReference type="NCBIfam" id="NF007180">
    <property type="entry name" value="PRK09612.1"/>
    <property type="match status" value="1"/>
</dbReference>
<dbReference type="PANTHER" id="PTHR13691:SF16">
    <property type="entry name" value="LARGE RIBOSOMAL SUBUNIT PROTEIN UL2"/>
    <property type="match status" value="1"/>
</dbReference>
<dbReference type="PANTHER" id="PTHR13691">
    <property type="entry name" value="RIBOSOMAL PROTEIN L2"/>
    <property type="match status" value="1"/>
</dbReference>
<dbReference type="Pfam" id="PF00181">
    <property type="entry name" value="Ribosomal_L2"/>
    <property type="match status" value="1"/>
</dbReference>
<dbReference type="Pfam" id="PF03947">
    <property type="entry name" value="Ribosomal_L2_C"/>
    <property type="match status" value="1"/>
</dbReference>
<dbReference type="PIRSF" id="PIRSF002158">
    <property type="entry name" value="Ribosomal_L2"/>
    <property type="match status" value="1"/>
</dbReference>
<dbReference type="SMART" id="SM01383">
    <property type="entry name" value="Ribosomal_L2"/>
    <property type="match status" value="1"/>
</dbReference>
<dbReference type="SMART" id="SM01382">
    <property type="entry name" value="Ribosomal_L2_C"/>
    <property type="match status" value="1"/>
</dbReference>
<dbReference type="SUPFAM" id="SSF50249">
    <property type="entry name" value="Nucleic acid-binding proteins"/>
    <property type="match status" value="1"/>
</dbReference>
<dbReference type="SUPFAM" id="SSF50104">
    <property type="entry name" value="Translation proteins SH3-like domain"/>
    <property type="match status" value="1"/>
</dbReference>
<dbReference type="PROSITE" id="PS00467">
    <property type="entry name" value="RIBOSOMAL_L2"/>
    <property type="match status" value="1"/>
</dbReference>
<accession>O28357</accession>
<name>RL2_ARCFU</name>
<evidence type="ECO:0000255" key="1">
    <source>
        <dbReference type="HAMAP-Rule" id="MF_01320"/>
    </source>
</evidence>
<evidence type="ECO:0000256" key="2">
    <source>
        <dbReference type="SAM" id="MobiDB-lite"/>
    </source>
</evidence>
<evidence type="ECO:0000305" key="3"/>
<organism>
    <name type="scientific">Archaeoglobus fulgidus (strain ATCC 49558 / DSM 4304 / JCM 9628 / NBRC 100126 / VC-16)</name>
    <dbReference type="NCBI Taxonomy" id="224325"/>
    <lineage>
        <taxon>Archaea</taxon>
        <taxon>Methanobacteriati</taxon>
        <taxon>Methanobacteriota</taxon>
        <taxon>Archaeoglobi</taxon>
        <taxon>Archaeoglobales</taxon>
        <taxon>Archaeoglobaceae</taxon>
        <taxon>Archaeoglobus</taxon>
    </lineage>
</organism>
<feature type="chain" id="PRO_0000129711" description="Large ribosomal subunit protein uL2">
    <location>
        <begin position="1"/>
        <end position="237"/>
    </location>
</feature>
<feature type="region of interest" description="Disordered" evidence="2">
    <location>
        <begin position="1"/>
        <end position="20"/>
    </location>
</feature>
<feature type="region of interest" description="Disordered" evidence="2">
    <location>
        <begin position="201"/>
        <end position="237"/>
    </location>
</feature>
<feature type="compositionally biased region" description="Polar residues" evidence="2">
    <location>
        <begin position="1"/>
        <end position="11"/>
    </location>
</feature>
<reference key="1">
    <citation type="journal article" date="1997" name="Nature">
        <title>The complete genome sequence of the hyperthermophilic, sulphate-reducing archaeon Archaeoglobus fulgidus.</title>
        <authorList>
            <person name="Klenk H.-P."/>
            <person name="Clayton R.A."/>
            <person name="Tomb J.-F."/>
            <person name="White O."/>
            <person name="Nelson K.E."/>
            <person name="Ketchum K.A."/>
            <person name="Dodson R.J."/>
            <person name="Gwinn M.L."/>
            <person name="Hickey E.K."/>
            <person name="Peterson J.D."/>
            <person name="Richardson D.L."/>
            <person name="Kerlavage A.R."/>
            <person name="Graham D.E."/>
            <person name="Kyrpides N.C."/>
            <person name="Fleischmann R.D."/>
            <person name="Quackenbush J."/>
            <person name="Lee N.H."/>
            <person name="Sutton G.G."/>
            <person name="Gill S.R."/>
            <person name="Kirkness E.F."/>
            <person name="Dougherty B.A."/>
            <person name="McKenney K."/>
            <person name="Adams M.D."/>
            <person name="Loftus B.J."/>
            <person name="Peterson S.N."/>
            <person name="Reich C.I."/>
            <person name="McNeil L.K."/>
            <person name="Badger J.H."/>
            <person name="Glodek A."/>
            <person name="Zhou L."/>
            <person name="Overbeek R."/>
            <person name="Gocayne J.D."/>
            <person name="Weidman J.F."/>
            <person name="McDonald L.A."/>
            <person name="Utterback T.R."/>
            <person name="Cotton M.D."/>
            <person name="Spriggs T."/>
            <person name="Artiach P."/>
            <person name="Kaine B.P."/>
            <person name="Sykes S.M."/>
            <person name="Sadow P.W."/>
            <person name="D'Andrea K.P."/>
            <person name="Bowman C."/>
            <person name="Fujii C."/>
            <person name="Garland S.A."/>
            <person name="Mason T.M."/>
            <person name="Olsen G.J."/>
            <person name="Fraser C.M."/>
            <person name="Smith H.O."/>
            <person name="Woese C.R."/>
            <person name="Venter J.C."/>
        </authorList>
    </citation>
    <scope>NUCLEOTIDE SEQUENCE [LARGE SCALE GENOMIC DNA]</scope>
    <source>
        <strain>ATCC 49558 / DSM 4304 / JCM 9628 / NBRC 100126 / VC-16</strain>
    </source>
</reference>
<gene>
    <name evidence="1" type="primary">rpl2</name>
    <name type="ordered locus">AF_1922</name>
</gene>
<comment type="function">
    <text evidence="1">One of the primary rRNA binding proteins. Required for association of the 30S and 50S subunits to form the 70S ribosome, for tRNA binding and peptide bond formation. It has been suggested to have peptidyltransferase activity; this is somewhat controversial. Makes several contacts with the 16S rRNA in the 70S ribosome.</text>
</comment>
<comment type="subunit">
    <text evidence="1">Part of the 50S ribosomal subunit. Forms a bridge to the 30S subunit in the 70S ribosome.</text>
</comment>
<comment type="similarity">
    <text evidence="1">Belongs to the universal ribosomal protein uL2 family.</text>
</comment>
<proteinExistence type="inferred from homology"/>
<sequence length="237" mass="25519">MGKRIISQNRGKGTPTYRAPSHRYKTDAKLLRFKDEVVAAKVIDIQHDSARNGPVALVKLPDGSETYILAVEGLGTGDVVYAGDNVEIASGNITYLKNIPEGTPVCNIEAQPGDGGKFIRASGTFGFVVSREADKVLVQMPSGKQKWFHPNCRAMIGVVAGGGRTDKPFVKAGKKYHKMKSKAAKWPRVRGVAMNAVDHPFGGGKHQHVGKPKTVSRNAPPGRKVGSIAARRTGVRR</sequence>